<feature type="chain" id="PRO_1000127838" description="ATP synthase epsilon chain">
    <location>
        <begin position="1"/>
        <end position="134"/>
    </location>
</feature>
<gene>
    <name evidence="1" type="primary">atpC</name>
    <name type="ordered locus">CLL_A0499</name>
</gene>
<protein>
    <recommendedName>
        <fullName evidence="1">ATP synthase epsilon chain</fullName>
    </recommendedName>
    <alternativeName>
        <fullName evidence="1">ATP synthase F1 sector epsilon subunit</fullName>
    </alternativeName>
    <alternativeName>
        <fullName evidence="1">F-ATPase epsilon subunit</fullName>
    </alternativeName>
</protein>
<keyword id="KW-0066">ATP synthesis</keyword>
<keyword id="KW-1003">Cell membrane</keyword>
<keyword id="KW-0139">CF(1)</keyword>
<keyword id="KW-0375">Hydrogen ion transport</keyword>
<keyword id="KW-0406">Ion transport</keyword>
<keyword id="KW-0472">Membrane</keyword>
<keyword id="KW-0813">Transport</keyword>
<reference key="1">
    <citation type="submission" date="2008-04" db="EMBL/GenBank/DDBJ databases">
        <title>Complete sequence of Clostridium botulinum strain Eklund.</title>
        <authorList>
            <person name="Brinkac L.M."/>
            <person name="Brown J.L."/>
            <person name="Bruce D."/>
            <person name="Detter C."/>
            <person name="Munk C."/>
            <person name="Smith L.A."/>
            <person name="Smith T.J."/>
            <person name="Sutton G."/>
            <person name="Brettin T.S."/>
        </authorList>
    </citation>
    <scope>NUCLEOTIDE SEQUENCE [LARGE SCALE GENOMIC DNA]</scope>
    <source>
        <strain>Eklund 17B / Type B</strain>
    </source>
</reference>
<accession>B2TK01</accession>
<dbReference type="EMBL" id="CP001056">
    <property type="protein sequence ID" value="ACD21710.1"/>
    <property type="molecule type" value="Genomic_DNA"/>
</dbReference>
<dbReference type="SMR" id="B2TK01"/>
<dbReference type="KEGG" id="cbk:CLL_A0499"/>
<dbReference type="HOGENOM" id="CLU_084338_1_1_9"/>
<dbReference type="Proteomes" id="UP000001195">
    <property type="component" value="Chromosome"/>
</dbReference>
<dbReference type="GO" id="GO:0005886">
    <property type="term" value="C:plasma membrane"/>
    <property type="evidence" value="ECO:0007669"/>
    <property type="project" value="UniProtKB-SubCell"/>
</dbReference>
<dbReference type="GO" id="GO:0045259">
    <property type="term" value="C:proton-transporting ATP synthase complex"/>
    <property type="evidence" value="ECO:0007669"/>
    <property type="project" value="UniProtKB-KW"/>
</dbReference>
<dbReference type="GO" id="GO:0005524">
    <property type="term" value="F:ATP binding"/>
    <property type="evidence" value="ECO:0007669"/>
    <property type="project" value="UniProtKB-UniRule"/>
</dbReference>
<dbReference type="GO" id="GO:0046933">
    <property type="term" value="F:proton-transporting ATP synthase activity, rotational mechanism"/>
    <property type="evidence" value="ECO:0007669"/>
    <property type="project" value="UniProtKB-UniRule"/>
</dbReference>
<dbReference type="CDD" id="cd12152">
    <property type="entry name" value="F1-ATPase_delta"/>
    <property type="match status" value="1"/>
</dbReference>
<dbReference type="Gene3D" id="1.20.5.440">
    <property type="entry name" value="ATP synthase delta/epsilon subunit, C-terminal domain"/>
    <property type="match status" value="1"/>
</dbReference>
<dbReference type="Gene3D" id="2.60.15.10">
    <property type="entry name" value="F0F1 ATP synthase delta/epsilon subunit, N-terminal"/>
    <property type="match status" value="1"/>
</dbReference>
<dbReference type="HAMAP" id="MF_00530">
    <property type="entry name" value="ATP_synth_epsil_bac"/>
    <property type="match status" value="1"/>
</dbReference>
<dbReference type="InterPro" id="IPR036794">
    <property type="entry name" value="ATP_F1_dsu/esu_C_sf"/>
</dbReference>
<dbReference type="InterPro" id="IPR001469">
    <property type="entry name" value="ATP_synth_F1_dsu/esu"/>
</dbReference>
<dbReference type="InterPro" id="IPR020546">
    <property type="entry name" value="ATP_synth_F1_dsu/esu_N"/>
</dbReference>
<dbReference type="InterPro" id="IPR020547">
    <property type="entry name" value="ATP_synth_F1_esu_C"/>
</dbReference>
<dbReference type="InterPro" id="IPR036771">
    <property type="entry name" value="ATPsynth_dsu/esu_N"/>
</dbReference>
<dbReference type="NCBIfam" id="TIGR01216">
    <property type="entry name" value="ATP_synt_epsi"/>
    <property type="match status" value="1"/>
</dbReference>
<dbReference type="PANTHER" id="PTHR13822">
    <property type="entry name" value="ATP SYNTHASE DELTA/EPSILON CHAIN"/>
    <property type="match status" value="1"/>
</dbReference>
<dbReference type="PANTHER" id="PTHR13822:SF10">
    <property type="entry name" value="ATP SYNTHASE EPSILON CHAIN, CHLOROPLASTIC"/>
    <property type="match status" value="1"/>
</dbReference>
<dbReference type="Pfam" id="PF00401">
    <property type="entry name" value="ATP-synt_DE"/>
    <property type="match status" value="1"/>
</dbReference>
<dbReference type="Pfam" id="PF02823">
    <property type="entry name" value="ATP-synt_DE_N"/>
    <property type="match status" value="1"/>
</dbReference>
<dbReference type="SUPFAM" id="SSF46604">
    <property type="entry name" value="Epsilon subunit of F1F0-ATP synthase C-terminal domain"/>
    <property type="match status" value="1"/>
</dbReference>
<dbReference type="SUPFAM" id="SSF51344">
    <property type="entry name" value="Epsilon subunit of F1F0-ATP synthase N-terminal domain"/>
    <property type="match status" value="1"/>
</dbReference>
<proteinExistence type="inferred from homology"/>
<evidence type="ECO:0000255" key="1">
    <source>
        <dbReference type="HAMAP-Rule" id="MF_00530"/>
    </source>
</evidence>
<comment type="function">
    <text evidence="1">Produces ATP from ADP in the presence of a proton gradient across the membrane.</text>
</comment>
<comment type="subunit">
    <text evidence="1">F-type ATPases have 2 components, CF(1) - the catalytic core - and CF(0) - the membrane proton channel. CF(1) has five subunits: alpha(3), beta(3), gamma(1), delta(1), epsilon(1). CF(0) has three main subunits: a, b and c.</text>
</comment>
<comment type="subcellular location">
    <subcellularLocation>
        <location evidence="1">Cell membrane</location>
        <topology evidence="1">Peripheral membrane protein</topology>
    </subcellularLocation>
</comment>
<comment type="similarity">
    <text evidence="1">Belongs to the ATPase epsilon chain family.</text>
</comment>
<name>ATPE_CLOBB</name>
<sequence length="134" mass="15269">MADTFLLKIVTPDKDIFNGNIKRIFLKNSVGRLEILANHANMVTSTISSIVEFTDADGKDRKLFISKGIASIFNNEMTIFSESAEFSDNIDLNRAEKAKERAEKRLLEGNKYDKERAELALLRSIERINLKKMN</sequence>
<organism>
    <name type="scientific">Clostridium botulinum (strain Eklund 17B / Type B)</name>
    <dbReference type="NCBI Taxonomy" id="935198"/>
    <lineage>
        <taxon>Bacteria</taxon>
        <taxon>Bacillati</taxon>
        <taxon>Bacillota</taxon>
        <taxon>Clostridia</taxon>
        <taxon>Eubacteriales</taxon>
        <taxon>Clostridiaceae</taxon>
        <taxon>Clostridium</taxon>
    </lineage>
</organism>